<dbReference type="EC" id="3.6.-.-" evidence="1"/>
<dbReference type="EMBL" id="CP000304">
    <property type="protein sequence ID" value="ABP81832.1"/>
    <property type="molecule type" value="Genomic_DNA"/>
</dbReference>
<dbReference type="RefSeq" id="WP_011915209.1">
    <property type="nucleotide sequence ID" value="NC_009434.1"/>
</dbReference>
<dbReference type="SMR" id="A4VS81"/>
<dbReference type="KEGG" id="psa:PST_4210"/>
<dbReference type="eggNOG" id="COG0486">
    <property type="taxonomic scope" value="Bacteria"/>
</dbReference>
<dbReference type="HOGENOM" id="CLU_019624_4_1_6"/>
<dbReference type="Proteomes" id="UP000000233">
    <property type="component" value="Chromosome"/>
</dbReference>
<dbReference type="GO" id="GO:0005829">
    <property type="term" value="C:cytosol"/>
    <property type="evidence" value="ECO:0007669"/>
    <property type="project" value="TreeGrafter"/>
</dbReference>
<dbReference type="GO" id="GO:0005525">
    <property type="term" value="F:GTP binding"/>
    <property type="evidence" value="ECO:0007669"/>
    <property type="project" value="UniProtKB-UniRule"/>
</dbReference>
<dbReference type="GO" id="GO:0003924">
    <property type="term" value="F:GTPase activity"/>
    <property type="evidence" value="ECO:0007669"/>
    <property type="project" value="UniProtKB-UniRule"/>
</dbReference>
<dbReference type="GO" id="GO:0046872">
    <property type="term" value="F:metal ion binding"/>
    <property type="evidence" value="ECO:0007669"/>
    <property type="project" value="UniProtKB-KW"/>
</dbReference>
<dbReference type="GO" id="GO:0030488">
    <property type="term" value="P:tRNA methylation"/>
    <property type="evidence" value="ECO:0007669"/>
    <property type="project" value="TreeGrafter"/>
</dbReference>
<dbReference type="GO" id="GO:0002098">
    <property type="term" value="P:tRNA wobble uridine modification"/>
    <property type="evidence" value="ECO:0007669"/>
    <property type="project" value="TreeGrafter"/>
</dbReference>
<dbReference type="CDD" id="cd04164">
    <property type="entry name" value="trmE"/>
    <property type="match status" value="1"/>
</dbReference>
<dbReference type="CDD" id="cd14858">
    <property type="entry name" value="TrmE_N"/>
    <property type="match status" value="1"/>
</dbReference>
<dbReference type="FunFam" id="3.30.1360.120:FF:000001">
    <property type="entry name" value="tRNA modification GTPase MnmE"/>
    <property type="match status" value="1"/>
</dbReference>
<dbReference type="FunFam" id="3.40.50.300:FF:000249">
    <property type="entry name" value="tRNA modification GTPase MnmE"/>
    <property type="match status" value="1"/>
</dbReference>
<dbReference type="Gene3D" id="3.40.50.300">
    <property type="entry name" value="P-loop containing nucleotide triphosphate hydrolases"/>
    <property type="match status" value="1"/>
</dbReference>
<dbReference type="Gene3D" id="3.30.1360.120">
    <property type="entry name" value="Probable tRNA modification gtpase trme, domain 1"/>
    <property type="match status" value="1"/>
</dbReference>
<dbReference type="Gene3D" id="1.20.120.430">
    <property type="entry name" value="tRNA modification GTPase MnmE domain 2"/>
    <property type="match status" value="1"/>
</dbReference>
<dbReference type="HAMAP" id="MF_00379">
    <property type="entry name" value="GTPase_MnmE"/>
    <property type="match status" value="1"/>
</dbReference>
<dbReference type="InterPro" id="IPR031168">
    <property type="entry name" value="G_TrmE"/>
</dbReference>
<dbReference type="InterPro" id="IPR006073">
    <property type="entry name" value="GTP-bd"/>
</dbReference>
<dbReference type="InterPro" id="IPR018948">
    <property type="entry name" value="GTP-bd_TrmE_N"/>
</dbReference>
<dbReference type="InterPro" id="IPR004520">
    <property type="entry name" value="GTPase_MnmE"/>
</dbReference>
<dbReference type="InterPro" id="IPR027368">
    <property type="entry name" value="MnmE_dom2"/>
</dbReference>
<dbReference type="InterPro" id="IPR025867">
    <property type="entry name" value="MnmE_helical"/>
</dbReference>
<dbReference type="InterPro" id="IPR027417">
    <property type="entry name" value="P-loop_NTPase"/>
</dbReference>
<dbReference type="InterPro" id="IPR005225">
    <property type="entry name" value="Small_GTP-bd"/>
</dbReference>
<dbReference type="InterPro" id="IPR027266">
    <property type="entry name" value="TrmE/GcvT_dom1"/>
</dbReference>
<dbReference type="NCBIfam" id="TIGR00450">
    <property type="entry name" value="mnmE_trmE_thdF"/>
    <property type="match status" value="1"/>
</dbReference>
<dbReference type="NCBIfam" id="NF003661">
    <property type="entry name" value="PRK05291.1-3"/>
    <property type="match status" value="1"/>
</dbReference>
<dbReference type="NCBIfam" id="TIGR00231">
    <property type="entry name" value="small_GTP"/>
    <property type="match status" value="1"/>
</dbReference>
<dbReference type="PANTHER" id="PTHR42714">
    <property type="entry name" value="TRNA MODIFICATION GTPASE GTPBP3"/>
    <property type="match status" value="1"/>
</dbReference>
<dbReference type="PANTHER" id="PTHR42714:SF2">
    <property type="entry name" value="TRNA MODIFICATION GTPASE GTPBP3, MITOCHONDRIAL"/>
    <property type="match status" value="1"/>
</dbReference>
<dbReference type="Pfam" id="PF01926">
    <property type="entry name" value="MMR_HSR1"/>
    <property type="match status" value="1"/>
</dbReference>
<dbReference type="Pfam" id="PF12631">
    <property type="entry name" value="MnmE_helical"/>
    <property type="match status" value="1"/>
</dbReference>
<dbReference type="Pfam" id="PF10396">
    <property type="entry name" value="TrmE_N"/>
    <property type="match status" value="1"/>
</dbReference>
<dbReference type="PRINTS" id="PR00326">
    <property type="entry name" value="GTP1OBG"/>
</dbReference>
<dbReference type="SUPFAM" id="SSF52540">
    <property type="entry name" value="P-loop containing nucleoside triphosphate hydrolases"/>
    <property type="match status" value="1"/>
</dbReference>
<dbReference type="SUPFAM" id="SSF116878">
    <property type="entry name" value="TrmE connector domain"/>
    <property type="match status" value="1"/>
</dbReference>
<dbReference type="PROSITE" id="PS51709">
    <property type="entry name" value="G_TRME"/>
    <property type="match status" value="1"/>
</dbReference>
<keyword id="KW-0963">Cytoplasm</keyword>
<keyword id="KW-0342">GTP-binding</keyword>
<keyword id="KW-0378">Hydrolase</keyword>
<keyword id="KW-0460">Magnesium</keyword>
<keyword id="KW-0479">Metal-binding</keyword>
<keyword id="KW-0547">Nucleotide-binding</keyword>
<keyword id="KW-0630">Potassium</keyword>
<keyword id="KW-1185">Reference proteome</keyword>
<keyword id="KW-0819">tRNA processing</keyword>
<reference key="1">
    <citation type="journal article" date="2008" name="Proc. Natl. Acad. Sci. U.S.A.">
        <title>Nitrogen fixation island and rhizosphere competence traits in the genome of root-associated Pseudomonas stutzeri A1501.</title>
        <authorList>
            <person name="Yan Y."/>
            <person name="Yang J."/>
            <person name="Dou Y."/>
            <person name="Chen M."/>
            <person name="Ping S."/>
            <person name="Peng J."/>
            <person name="Lu W."/>
            <person name="Zhang W."/>
            <person name="Yao Z."/>
            <person name="Li H."/>
            <person name="Liu W."/>
            <person name="He S."/>
            <person name="Geng L."/>
            <person name="Zhang X."/>
            <person name="Yang F."/>
            <person name="Yu H."/>
            <person name="Zhan Y."/>
            <person name="Li D."/>
            <person name="Lin Z."/>
            <person name="Wang Y."/>
            <person name="Elmerich C."/>
            <person name="Lin M."/>
            <person name="Jin Q."/>
        </authorList>
    </citation>
    <scope>NUCLEOTIDE SEQUENCE [LARGE SCALE GENOMIC DNA]</scope>
    <source>
        <strain>A1501</strain>
    </source>
</reference>
<evidence type="ECO:0000255" key="1">
    <source>
        <dbReference type="HAMAP-Rule" id="MF_00379"/>
    </source>
</evidence>
<feature type="chain" id="PRO_1000048861" description="tRNA modification GTPase MnmE">
    <location>
        <begin position="1"/>
        <end position="455"/>
    </location>
</feature>
<feature type="domain" description="TrmE-type G">
    <location>
        <begin position="216"/>
        <end position="378"/>
    </location>
</feature>
<feature type="binding site" evidence="1">
    <location>
        <position position="24"/>
    </location>
    <ligand>
        <name>(6S)-5-formyl-5,6,7,8-tetrahydrofolate</name>
        <dbReference type="ChEBI" id="CHEBI:57457"/>
    </ligand>
</feature>
<feature type="binding site" evidence="1">
    <location>
        <position position="81"/>
    </location>
    <ligand>
        <name>(6S)-5-formyl-5,6,7,8-tetrahydrofolate</name>
        <dbReference type="ChEBI" id="CHEBI:57457"/>
    </ligand>
</feature>
<feature type="binding site" evidence="1">
    <location>
        <position position="120"/>
    </location>
    <ligand>
        <name>(6S)-5-formyl-5,6,7,8-tetrahydrofolate</name>
        <dbReference type="ChEBI" id="CHEBI:57457"/>
    </ligand>
</feature>
<feature type="binding site" evidence="1">
    <location>
        <begin position="226"/>
        <end position="231"/>
    </location>
    <ligand>
        <name>GTP</name>
        <dbReference type="ChEBI" id="CHEBI:37565"/>
    </ligand>
</feature>
<feature type="binding site" evidence="1">
    <location>
        <position position="226"/>
    </location>
    <ligand>
        <name>K(+)</name>
        <dbReference type="ChEBI" id="CHEBI:29103"/>
    </ligand>
</feature>
<feature type="binding site" evidence="1">
    <location>
        <position position="230"/>
    </location>
    <ligand>
        <name>Mg(2+)</name>
        <dbReference type="ChEBI" id="CHEBI:18420"/>
    </ligand>
</feature>
<feature type="binding site" evidence="1">
    <location>
        <begin position="245"/>
        <end position="251"/>
    </location>
    <ligand>
        <name>GTP</name>
        <dbReference type="ChEBI" id="CHEBI:37565"/>
    </ligand>
</feature>
<feature type="binding site" evidence="1">
    <location>
        <position position="245"/>
    </location>
    <ligand>
        <name>K(+)</name>
        <dbReference type="ChEBI" id="CHEBI:29103"/>
    </ligand>
</feature>
<feature type="binding site" evidence="1">
    <location>
        <position position="247"/>
    </location>
    <ligand>
        <name>K(+)</name>
        <dbReference type="ChEBI" id="CHEBI:29103"/>
    </ligand>
</feature>
<feature type="binding site" evidence="1">
    <location>
        <position position="250"/>
    </location>
    <ligand>
        <name>K(+)</name>
        <dbReference type="ChEBI" id="CHEBI:29103"/>
    </ligand>
</feature>
<feature type="binding site" evidence="1">
    <location>
        <position position="251"/>
    </location>
    <ligand>
        <name>Mg(2+)</name>
        <dbReference type="ChEBI" id="CHEBI:18420"/>
    </ligand>
</feature>
<feature type="binding site" evidence="1">
    <location>
        <begin position="270"/>
        <end position="273"/>
    </location>
    <ligand>
        <name>GTP</name>
        <dbReference type="ChEBI" id="CHEBI:37565"/>
    </ligand>
</feature>
<feature type="binding site" evidence="1">
    <location>
        <begin position="335"/>
        <end position="338"/>
    </location>
    <ligand>
        <name>GTP</name>
        <dbReference type="ChEBI" id="CHEBI:37565"/>
    </ligand>
</feature>
<feature type="binding site" evidence="1">
    <location>
        <position position="455"/>
    </location>
    <ligand>
        <name>(6S)-5-formyl-5,6,7,8-tetrahydrofolate</name>
        <dbReference type="ChEBI" id="CHEBI:57457"/>
    </ligand>
</feature>
<protein>
    <recommendedName>
        <fullName evidence="1">tRNA modification GTPase MnmE</fullName>
        <ecNumber evidence="1">3.6.-.-</ecNumber>
    </recommendedName>
</protein>
<gene>
    <name evidence="1" type="primary">mnmE</name>
    <name evidence="1" type="synonym">trmE</name>
    <name type="ordered locus">PST_4210</name>
</gene>
<proteinExistence type="inferred from homology"/>
<comment type="function">
    <text evidence="1">Exhibits a very high intrinsic GTPase hydrolysis rate. Involved in the addition of a carboxymethylaminomethyl (cmnm) group at the wobble position (U34) of certain tRNAs, forming tRNA-cmnm(5)s(2)U34.</text>
</comment>
<comment type="cofactor">
    <cofactor evidence="1">
        <name>K(+)</name>
        <dbReference type="ChEBI" id="CHEBI:29103"/>
    </cofactor>
    <text evidence="1">Binds 1 potassium ion per subunit.</text>
</comment>
<comment type="subunit">
    <text evidence="1">Homodimer. Heterotetramer of two MnmE and two MnmG subunits.</text>
</comment>
<comment type="subcellular location">
    <subcellularLocation>
        <location evidence="1">Cytoplasm</location>
    </subcellularLocation>
</comment>
<comment type="similarity">
    <text evidence="1">Belongs to the TRAFAC class TrmE-Era-EngA-EngB-Septin-like GTPase superfamily. TrmE GTPase family.</text>
</comment>
<sequence>MIPARDTIAAVATAPGRGGVGIVRVSGPRARAIAITLSGREPTPRHAHYGPFHADDGEVIDEGLLLFFPGPHSFTGEDVLELHGHGGPVVLDMLLQRCVDLGVRLARPGEFSERAFLNDKLDLAQAEAIADLIEASSAQAARNAVRSLQGEFSRRVHQLTERLIQLRIYVEAAIDFPEEEIDFLADGHVLAQLDGVRTELSTVLREAGQGALLRDGMTVVIAGRPNAGKSSLLNALAGREAAIVTDIAGTTRDVLREHILIDGMPLHVVDTAGLRDTEDQVERIGVQRALSAIGEADRILLVVDASAPEASDPSALWPEFLDFSPEPGKVTLIRNKADLTGEAIVLRCDNDGQATLSLCARSGEGLELLREHLKHCMGYEQTAESSFSARRRHLDALRLADEHLRHGHDQLTLAGAGELLAEDLRLAQQALGEITGAFSSDDLLGRIFSSFCIGK</sequence>
<organism>
    <name type="scientific">Stutzerimonas stutzeri (strain A1501)</name>
    <name type="common">Pseudomonas stutzeri</name>
    <dbReference type="NCBI Taxonomy" id="379731"/>
    <lineage>
        <taxon>Bacteria</taxon>
        <taxon>Pseudomonadati</taxon>
        <taxon>Pseudomonadota</taxon>
        <taxon>Gammaproteobacteria</taxon>
        <taxon>Pseudomonadales</taxon>
        <taxon>Pseudomonadaceae</taxon>
        <taxon>Stutzerimonas</taxon>
    </lineage>
</organism>
<accession>A4VS81</accession>
<name>MNME_STUS1</name>